<name>DLGD_ECO8A</name>
<reference key="1">
    <citation type="journal article" date="2009" name="PLoS Genet.">
        <title>Organised genome dynamics in the Escherichia coli species results in highly diverse adaptive paths.</title>
        <authorList>
            <person name="Touchon M."/>
            <person name="Hoede C."/>
            <person name="Tenaillon O."/>
            <person name="Barbe V."/>
            <person name="Baeriswyl S."/>
            <person name="Bidet P."/>
            <person name="Bingen E."/>
            <person name="Bonacorsi S."/>
            <person name="Bouchier C."/>
            <person name="Bouvet O."/>
            <person name="Calteau A."/>
            <person name="Chiapello H."/>
            <person name="Clermont O."/>
            <person name="Cruveiller S."/>
            <person name="Danchin A."/>
            <person name="Diard M."/>
            <person name="Dossat C."/>
            <person name="Karoui M.E."/>
            <person name="Frapy E."/>
            <person name="Garry L."/>
            <person name="Ghigo J.M."/>
            <person name="Gilles A.M."/>
            <person name="Johnson J."/>
            <person name="Le Bouguenec C."/>
            <person name="Lescat M."/>
            <person name="Mangenot S."/>
            <person name="Martinez-Jehanne V."/>
            <person name="Matic I."/>
            <person name="Nassif X."/>
            <person name="Oztas S."/>
            <person name="Petit M.A."/>
            <person name="Pichon C."/>
            <person name="Rouy Z."/>
            <person name="Ruf C.S."/>
            <person name="Schneider D."/>
            <person name="Tourret J."/>
            <person name="Vacherie B."/>
            <person name="Vallenet D."/>
            <person name="Medigue C."/>
            <person name="Rocha E.P.C."/>
            <person name="Denamur E."/>
        </authorList>
    </citation>
    <scope>NUCLEOTIDE SEQUENCE [LARGE SCALE GENOMIC DNA]</scope>
    <source>
        <strain>IAI1</strain>
    </source>
</reference>
<evidence type="ECO:0000255" key="1">
    <source>
        <dbReference type="HAMAP-Rule" id="MF_00820"/>
    </source>
</evidence>
<gene>
    <name evidence="1" type="primary">dlgD</name>
    <name type="ordered locus">ECIAI1_3742</name>
</gene>
<keyword id="KW-0963">Cytoplasm</keyword>
<keyword id="KW-0520">NAD</keyword>
<keyword id="KW-0560">Oxidoreductase</keyword>
<dbReference type="EC" id="1.1.1.130" evidence="1"/>
<dbReference type="EMBL" id="CU928160">
    <property type="protein sequence ID" value="CAR00539.1"/>
    <property type="molecule type" value="Genomic_DNA"/>
</dbReference>
<dbReference type="SMR" id="B7M3J9"/>
<dbReference type="KEGG" id="ecr:ECIAI1_3742"/>
<dbReference type="HOGENOM" id="CLU_040452_4_0_6"/>
<dbReference type="GO" id="GO:0005737">
    <property type="term" value="C:cytoplasm"/>
    <property type="evidence" value="ECO:0007669"/>
    <property type="project" value="UniProtKB-SubCell"/>
</dbReference>
<dbReference type="GO" id="GO:0047559">
    <property type="term" value="F:3-dehydro-L-gulonate 2-dehydrogenase activity"/>
    <property type="evidence" value="ECO:0007669"/>
    <property type="project" value="UniProtKB-UniRule"/>
</dbReference>
<dbReference type="GO" id="GO:0070403">
    <property type="term" value="F:NAD+ binding"/>
    <property type="evidence" value="ECO:0007669"/>
    <property type="project" value="InterPro"/>
</dbReference>
<dbReference type="FunFam" id="1.10.1530.10:FF:000001">
    <property type="entry name" value="2,3-diketo-L-gulonate reductase"/>
    <property type="match status" value="1"/>
</dbReference>
<dbReference type="Gene3D" id="1.10.1530.10">
    <property type="match status" value="1"/>
</dbReference>
<dbReference type="Gene3D" id="3.30.1370.60">
    <property type="entry name" value="Hypothetical oxidoreductase yiak, domain 2"/>
    <property type="match status" value="1"/>
</dbReference>
<dbReference type="Gene3D" id="3.30.60.50">
    <property type="entry name" value="Hypothetical oxidoreductase yiak, domain 3"/>
    <property type="match status" value="1"/>
</dbReference>
<dbReference type="HAMAP" id="MF_00820">
    <property type="entry name" value="Diketo_gul_reduc"/>
    <property type="match status" value="1"/>
</dbReference>
<dbReference type="InterPro" id="IPR023689">
    <property type="entry name" value="Diketo_gul_Rdtase"/>
</dbReference>
<dbReference type="InterPro" id="IPR043144">
    <property type="entry name" value="Mal/L-sulf/L-lact_DH-like_ah"/>
</dbReference>
<dbReference type="InterPro" id="IPR043143">
    <property type="entry name" value="Mal/L-sulf/L-lact_DH-like_NADP"/>
</dbReference>
<dbReference type="InterPro" id="IPR036111">
    <property type="entry name" value="Mal/L-sulfo/L-lacto_DH-like_sf"/>
</dbReference>
<dbReference type="InterPro" id="IPR003767">
    <property type="entry name" value="Malate/L-lactate_DH-like"/>
</dbReference>
<dbReference type="NCBIfam" id="NF009750">
    <property type="entry name" value="PRK13260.1"/>
    <property type="match status" value="1"/>
</dbReference>
<dbReference type="PANTHER" id="PTHR11091:SF3">
    <property type="entry name" value="2,3-DIKETO-L-GULONATE REDUCTASE"/>
    <property type="match status" value="1"/>
</dbReference>
<dbReference type="PANTHER" id="PTHR11091">
    <property type="entry name" value="OXIDOREDUCTASE-RELATED"/>
    <property type="match status" value="1"/>
</dbReference>
<dbReference type="Pfam" id="PF02615">
    <property type="entry name" value="Ldh_2"/>
    <property type="match status" value="1"/>
</dbReference>
<dbReference type="SUPFAM" id="SSF89733">
    <property type="entry name" value="L-sulfolactate dehydrogenase-like"/>
    <property type="match status" value="1"/>
</dbReference>
<sequence>MKVTFEQLKAAFNRVLISRGVDSETADACAEMFARTTESGVYSHGVNRFPRFIQQLENGDIIPDAQPKRITSLGAIEQWDAQRSIGNLTAKKMMDRAIELAADHGIGLVALRNANHWMRGGSYGWQAAEKGYIGICWTNSIAVMPPWGAKECRIGTNPLIVAIPSTPITMVDMSMSMFSYGMLEVNRLAGRQLPVDGGFDDEGNLTKEPGVIEKNRRILPMGYWKGSGMSIVLDMIATLLSDGASVAEVTQDNSDEYGISQIFIAIEVDKLIDGPTRDAKLQRIMDYVTTAERADENQAIRLPGHEFTTLLAENRRNGITVDDSVWAKIQAL</sequence>
<proteinExistence type="inferred from homology"/>
<organism>
    <name type="scientific">Escherichia coli O8 (strain IAI1)</name>
    <dbReference type="NCBI Taxonomy" id="585034"/>
    <lineage>
        <taxon>Bacteria</taxon>
        <taxon>Pseudomonadati</taxon>
        <taxon>Pseudomonadota</taxon>
        <taxon>Gammaproteobacteria</taxon>
        <taxon>Enterobacterales</taxon>
        <taxon>Enterobacteriaceae</taxon>
        <taxon>Escherichia</taxon>
    </lineage>
</organism>
<accession>B7M3J9</accession>
<feature type="chain" id="PRO_1000134339" description="2,3-diketo-L-gulonate reductase">
    <location>
        <begin position="1"/>
        <end position="332"/>
    </location>
</feature>
<feature type="active site" description="Proton donor" evidence="1">
    <location>
        <position position="44"/>
    </location>
</feature>
<feature type="binding site" evidence="1">
    <location>
        <begin position="168"/>
        <end position="174"/>
    </location>
    <ligand>
        <name>NAD(+)</name>
        <dbReference type="ChEBI" id="CHEBI:57540"/>
    </ligand>
</feature>
<feature type="binding site" evidence="1">
    <location>
        <begin position="224"/>
        <end position="225"/>
    </location>
    <ligand>
        <name>NAD(+)</name>
        <dbReference type="ChEBI" id="CHEBI:57540"/>
    </ligand>
</feature>
<feature type="binding site" evidence="1">
    <location>
        <begin position="304"/>
        <end position="306"/>
    </location>
    <ligand>
        <name>NAD(+)</name>
        <dbReference type="ChEBI" id="CHEBI:57540"/>
    </ligand>
</feature>
<comment type="function">
    <text evidence="1">Catalyzes the reduction of 2,3-diketo-L-gulonate in the presence of NADH, to form 3-keto-L-gulonate.</text>
</comment>
<comment type="catalytic activity">
    <reaction evidence="1">
        <text>3-dehydro-L-gulonate + NAD(+) = 2,3-dioxo-L-gulonate + NADH + H(+)</text>
        <dbReference type="Rhea" id="RHEA:21924"/>
        <dbReference type="ChEBI" id="CHEBI:15378"/>
        <dbReference type="ChEBI" id="CHEBI:57441"/>
        <dbReference type="ChEBI" id="CHEBI:57540"/>
        <dbReference type="ChEBI" id="CHEBI:57655"/>
        <dbReference type="ChEBI" id="CHEBI:57945"/>
        <dbReference type="EC" id="1.1.1.130"/>
    </reaction>
</comment>
<comment type="catalytic activity">
    <reaction evidence="1">
        <text>3-dehydro-L-gulonate + NADP(+) = 2,3-dioxo-L-gulonate + NADPH + H(+)</text>
        <dbReference type="Rhea" id="RHEA:21928"/>
        <dbReference type="ChEBI" id="CHEBI:15378"/>
        <dbReference type="ChEBI" id="CHEBI:57441"/>
        <dbReference type="ChEBI" id="CHEBI:57655"/>
        <dbReference type="ChEBI" id="CHEBI:57783"/>
        <dbReference type="ChEBI" id="CHEBI:58349"/>
        <dbReference type="EC" id="1.1.1.130"/>
    </reaction>
</comment>
<comment type="subunit">
    <text evidence="1">Homodimer.</text>
</comment>
<comment type="subcellular location">
    <subcellularLocation>
        <location evidence="1">Cytoplasm</location>
    </subcellularLocation>
</comment>
<comment type="similarity">
    <text evidence="1">Belongs to the LDH2/MDH2 oxidoreductase family. DlgD subfamily.</text>
</comment>
<protein>
    <recommendedName>
        <fullName evidence="1">2,3-diketo-L-gulonate reductase</fullName>
        <shortName evidence="1">2,3-DKG reductase</shortName>
        <ecNumber evidence="1">1.1.1.130</ecNumber>
    </recommendedName>
    <alternativeName>
        <fullName evidence="1">3-dehydro-L-gulonate 2-dehydrogenase</fullName>
    </alternativeName>
</protein>